<keyword id="KW-0472">Membrane</keyword>
<keyword id="KW-0503">Monooxygenase</keyword>
<keyword id="KW-0560">Oxidoreductase</keyword>
<keyword id="KW-1185">Reference proteome</keyword>
<keyword id="KW-0812">Transmembrane</keyword>
<keyword id="KW-1133">Transmembrane helix</keyword>
<proteinExistence type="evidence at transcript level"/>
<dbReference type="EC" id="1.10.3.-" evidence="8"/>
<dbReference type="EMBL" id="CAGA01000032">
    <property type="protein sequence ID" value="CCE31582.1"/>
    <property type="molecule type" value="Genomic_DNA"/>
</dbReference>
<dbReference type="VEuPathDB" id="FungiDB:CPUR_05435"/>
<dbReference type="eggNOG" id="ENOG502R15X">
    <property type="taxonomic scope" value="Eukaryota"/>
</dbReference>
<dbReference type="HOGENOM" id="CLU_105974_0_0_1"/>
<dbReference type="OrthoDB" id="5954308at2759"/>
<dbReference type="Proteomes" id="UP000016801">
    <property type="component" value="Unassembled WGS sequence"/>
</dbReference>
<dbReference type="GO" id="GO:0016020">
    <property type="term" value="C:membrane"/>
    <property type="evidence" value="ECO:0007669"/>
    <property type="project" value="UniProtKB-SubCell"/>
</dbReference>
<dbReference type="GO" id="GO:0004497">
    <property type="term" value="F:monooxygenase activity"/>
    <property type="evidence" value="ECO:0007669"/>
    <property type="project" value="UniProtKB-KW"/>
</dbReference>
<dbReference type="InterPro" id="IPR013901">
    <property type="entry name" value="Anthrone_oxy"/>
</dbReference>
<dbReference type="PANTHER" id="PTHR35042">
    <property type="entry name" value="ANTHRONE OXYGENASE ENCC"/>
    <property type="match status" value="1"/>
</dbReference>
<dbReference type="PANTHER" id="PTHR35042:SF3">
    <property type="entry name" value="ANTHRONE OXYGENASE-RELATED"/>
    <property type="match status" value="1"/>
</dbReference>
<dbReference type="Pfam" id="PF08592">
    <property type="entry name" value="Anthrone_oxy"/>
    <property type="match status" value="1"/>
</dbReference>
<comment type="function">
    <text evidence="1 2 4 5">Anthrone oxygenase; part of the ergochrome gene cluster responsible for the typical purple-black color of the ergot sclerotia (PubMed:28955461). The ergochrome gene cluster produces several ergot pigments including the yellow ergochrome secalonic acid and its derivatives, as well as the red anthraquinones endocrocin and clavorubin (PubMed:28955461). The pathway begins with the synthesis of atrochrysone thioester by the polyketide synthase (PKS) CPUR_05437 (By similarity). The atrochrysone carboxyl ACP thioesterase CPUR_05436 then breaks the thioester bond and releases the atrochrysone carboxylic acid from CPUR_05437 (By similarity). The decarboxylase CPUR_05434 then catalyzes the concerted decarboxylation-elimination required to convert atochrysone carboxylic acid into emodin anthrone, which is further oxidized to emodin by the anthrone oxygenase CPUR_05435 (By similarity). Emodin is further modified to yield monodictyphenone via several steps involving CPUR_05427, CPUR_05428, CPUR_05429 and CPUR_05430 (By similarity). The short chain dehydrogenase/reductase CPUR_05418 then catalyzes the C-5 ketoreduction to give the xanthone skeleton of the monomeric units (PubMed:32105084). Ergochromes formation requires further dimerization steps of different xanthone units, probably catalyzed by the cytochrome P450 monooxygenase CPUR_05419 (PubMed:28955461). CPUR_05425, CPUR_05426 and CPUR_05431 are unique to Claviceps, thus it is likely that they are involved in further modification of xanthone units or in their dimerization (PubMed:28955461). The yellow ergochromes and the red anthraquinone pigments endocrocin and clavorubin are products from the same PKS derived precursors and the latter are likely shunt products in the pathway of xanthone biosynthesis (PubMed:28955461). It is proposed that atrochrysone carboxylic acid released from the PKS CPUR_05437 can also be converted to endocrocin anthrone which is further oxidized into endocrocin by CPUR_05435 (By similarity). Endocrocin could be then modified to clavorubin, possibly by CPUR_05423 and CPUR_05431 (PubMed:28955461). Clavorubin is the principal anthraquinone metabolite produced by the cluster with a much higher yield compared to endocrocin (PubMed:28955461).</text>
</comment>
<comment type="catalytic activity">
    <reaction evidence="8">
        <text>emodin anthrone + O2 = emodin + H2O + H(+)</text>
        <dbReference type="Rhea" id="RHEA:64268"/>
        <dbReference type="ChEBI" id="CHEBI:15377"/>
        <dbReference type="ChEBI" id="CHEBI:15378"/>
        <dbReference type="ChEBI" id="CHEBI:15379"/>
        <dbReference type="ChEBI" id="CHEBI:77659"/>
        <dbReference type="ChEBI" id="CHEBI:150013"/>
    </reaction>
    <physiologicalReaction direction="left-to-right" evidence="8">
        <dbReference type="Rhea" id="RHEA:64269"/>
    </physiologicalReaction>
</comment>
<comment type="subcellular location">
    <subcellularLocation>
        <location evidence="3">Membrane</location>
        <topology evidence="3">Multi-pass membrane protein</topology>
    </subcellularLocation>
</comment>
<comment type="induction">
    <text evidence="4">Expression correlates with the formation of the sclerotia and thus the pigment production and is directly regulated by the cluster-specific activator CPUR_05433 (PubMed:28955461).</text>
</comment>
<comment type="similarity">
    <text evidence="7">Belongs to the anthrone oxygenase family.</text>
</comment>
<gene>
    <name type="ORF">CPUR_05435</name>
</gene>
<organism>
    <name type="scientific">Claviceps purpurea (strain 20.1)</name>
    <name type="common">Ergot fungus</name>
    <name type="synonym">Sphacelia segetum</name>
    <dbReference type="NCBI Taxonomy" id="1111077"/>
    <lineage>
        <taxon>Eukaryota</taxon>
        <taxon>Fungi</taxon>
        <taxon>Dikarya</taxon>
        <taxon>Ascomycota</taxon>
        <taxon>Pezizomycotina</taxon>
        <taxon>Sordariomycetes</taxon>
        <taxon>Hypocreomycetidae</taxon>
        <taxon>Hypocreales</taxon>
        <taxon>Clavicipitaceae</taxon>
        <taxon>Claviceps</taxon>
    </lineage>
</organism>
<name>PIG13_CLAP2</name>
<reference key="1">
    <citation type="journal article" date="2013" name="PLoS Genet.">
        <title>Plant-symbiotic fungi as chemical engineers: Multi-genome analysis of the Clavicipitaceae reveals dynamics of alkaloid loci.</title>
        <authorList>
            <person name="Schardl C.L."/>
            <person name="Young C.A."/>
            <person name="Hesse U."/>
            <person name="Amyotte S.G."/>
            <person name="Andreeva K."/>
            <person name="Calie P.J."/>
            <person name="Fleetwood D.J."/>
            <person name="Haws D.C."/>
            <person name="Moore N."/>
            <person name="Oeser B."/>
            <person name="Panaccione D.G."/>
            <person name="Schweri K.K."/>
            <person name="Voisey C.R."/>
            <person name="Farman M.L."/>
            <person name="Jaromczyk J.W."/>
            <person name="Roe B.A."/>
            <person name="O'Sullivan D.M."/>
            <person name="Scott B."/>
            <person name="Tudzynski P."/>
            <person name="An Z."/>
            <person name="Arnaoudova E.G."/>
            <person name="Bullock C.T."/>
            <person name="Charlton N.D."/>
            <person name="Chen L."/>
            <person name="Cox M."/>
            <person name="Dinkins R.D."/>
            <person name="Florea S."/>
            <person name="Glenn A.E."/>
            <person name="Gordon A."/>
            <person name="Gueldener U."/>
            <person name="Harris D.R."/>
            <person name="Hollin W."/>
            <person name="Jaromczyk J."/>
            <person name="Johnson R.D."/>
            <person name="Khan A.K."/>
            <person name="Leistner E."/>
            <person name="Leuchtmann A."/>
            <person name="Li C."/>
            <person name="Liu J."/>
            <person name="Liu J."/>
            <person name="Liu M."/>
            <person name="Mace W."/>
            <person name="Machado C."/>
            <person name="Nagabhyru P."/>
            <person name="Pan J."/>
            <person name="Schmid J."/>
            <person name="Sugawara K."/>
            <person name="Steiner U."/>
            <person name="Takach J.E."/>
            <person name="Tanaka E."/>
            <person name="Webb J.S."/>
            <person name="Wilson E.V."/>
            <person name="Wiseman J.L."/>
            <person name="Yoshida R."/>
            <person name="Zeng Z."/>
        </authorList>
    </citation>
    <scope>NUCLEOTIDE SEQUENCE [LARGE SCALE GENOMIC DNA]</scope>
    <source>
        <strain>20.1</strain>
    </source>
</reference>
<reference key="2">
    <citation type="journal article" date="2016" name="Fungal Biol. Biotechnol.">
        <title>Identification and characterization of the ergochrome gene cluster in the plant pathogenic fungus Claviceps purpurea.</title>
        <authorList>
            <person name="Neubauer L."/>
            <person name="Dopstadt J."/>
            <person name="Humpf H.U."/>
            <person name="Tudzynski P."/>
        </authorList>
    </citation>
    <scope>FUNCTION</scope>
    <scope>INDUCTION</scope>
</reference>
<reference key="3">
    <citation type="journal article" date="2020" name="Org. Lett.">
        <title>Unraveling the fungal strategy for tetrahydroxanthone biosynthesis and diversification.</title>
        <authorList>
            <person name="Wei X."/>
            <person name="Matsuda Y."/>
        </authorList>
    </citation>
    <scope>FUNCTION</scope>
</reference>
<sequence length="174" mass="18156">MLRGFAPTGVHVVALASGVFLSGAMFSVSAIMIPTLLDTNKEPAGLTTQWARLYHYGSVLMPSMSVAIAAVYGFASTQYRQSPQGMRCLAAGALTLAIAPYTWLAMIPTNNALFAMAASAPGFAGMQDANEKARDLVMKWVVLHSIRSILPLAGAIMGFTGISSGQEGVVGSAN</sequence>
<evidence type="ECO:0000250" key="1">
    <source>
        <dbReference type="UniProtKB" id="A4DA85"/>
    </source>
</evidence>
<evidence type="ECO:0000250" key="2">
    <source>
        <dbReference type="UniProtKB" id="Q5BH30"/>
    </source>
</evidence>
<evidence type="ECO:0000255" key="3"/>
<evidence type="ECO:0000269" key="4">
    <source>
    </source>
</evidence>
<evidence type="ECO:0000269" key="5">
    <source>
    </source>
</evidence>
<evidence type="ECO:0000303" key="6">
    <source>
    </source>
</evidence>
<evidence type="ECO:0000305" key="7"/>
<evidence type="ECO:0000305" key="8">
    <source>
    </source>
</evidence>
<accession>M1VWN5</accession>
<protein>
    <recommendedName>
        <fullName evidence="6">Anthrone oxygenase CPUR_05435</fullName>
        <ecNumber evidence="8">1.10.3.-</ecNumber>
    </recommendedName>
    <alternativeName>
        <fullName evidence="6">Ergochrome gene cluster protein CPUR_05435</fullName>
    </alternativeName>
</protein>
<feature type="chain" id="PRO_0000443984" description="Anthrone oxygenase CPUR_05435">
    <location>
        <begin position="1"/>
        <end position="174"/>
    </location>
</feature>
<feature type="transmembrane region" description="Helical" evidence="3">
    <location>
        <begin position="13"/>
        <end position="33"/>
    </location>
</feature>
<feature type="transmembrane region" description="Helical" evidence="3">
    <location>
        <begin position="56"/>
        <end position="76"/>
    </location>
</feature>
<feature type="transmembrane region" description="Helical" evidence="3">
    <location>
        <begin position="88"/>
        <end position="108"/>
    </location>
</feature>
<feature type="transmembrane region" description="Helical" evidence="3">
    <location>
        <begin position="140"/>
        <end position="160"/>
    </location>
</feature>